<accession>Q92RY3</accession>
<reference key="1">
    <citation type="journal article" date="2001" name="Proc. Natl. Acad. Sci. U.S.A.">
        <title>Analysis of the chromosome sequence of the legume symbiont Sinorhizobium meliloti strain 1021.</title>
        <authorList>
            <person name="Capela D."/>
            <person name="Barloy-Hubler F."/>
            <person name="Gouzy J."/>
            <person name="Bothe G."/>
            <person name="Ampe F."/>
            <person name="Batut J."/>
            <person name="Boistard P."/>
            <person name="Becker A."/>
            <person name="Boutry M."/>
            <person name="Cadieu E."/>
            <person name="Dreano S."/>
            <person name="Gloux S."/>
            <person name="Godrie T."/>
            <person name="Goffeau A."/>
            <person name="Kahn D."/>
            <person name="Kiss E."/>
            <person name="Lelaure V."/>
            <person name="Masuy D."/>
            <person name="Pohl T."/>
            <person name="Portetelle D."/>
            <person name="Puehler A."/>
            <person name="Purnelle B."/>
            <person name="Ramsperger U."/>
            <person name="Renard C."/>
            <person name="Thebault P."/>
            <person name="Vandenbol M."/>
            <person name="Weidner S."/>
            <person name="Galibert F."/>
        </authorList>
    </citation>
    <scope>NUCLEOTIDE SEQUENCE [LARGE SCALE GENOMIC DNA]</scope>
    <source>
        <strain>1021</strain>
    </source>
</reference>
<reference key="2">
    <citation type="journal article" date="2001" name="Science">
        <title>The composite genome of the legume symbiont Sinorhizobium meliloti.</title>
        <authorList>
            <person name="Galibert F."/>
            <person name="Finan T.M."/>
            <person name="Long S.R."/>
            <person name="Puehler A."/>
            <person name="Abola P."/>
            <person name="Ampe F."/>
            <person name="Barloy-Hubler F."/>
            <person name="Barnett M.J."/>
            <person name="Becker A."/>
            <person name="Boistard P."/>
            <person name="Bothe G."/>
            <person name="Boutry M."/>
            <person name="Bowser L."/>
            <person name="Buhrmester J."/>
            <person name="Cadieu E."/>
            <person name="Capela D."/>
            <person name="Chain P."/>
            <person name="Cowie A."/>
            <person name="Davis R.W."/>
            <person name="Dreano S."/>
            <person name="Federspiel N.A."/>
            <person name="Fisher R.F."/>
            <person name="Gloux S."/>
            <person name="Godrie T."/>
            <person name="Goffeau A."/>
            <person name="Golding B."/>
            <person name="Gouzy J."/>
            <person name="Gurjal M."/>
            <person name="Hernandez-Lucas I."/>
            <person name="Hong A."/>
            <person name="Huizar L."/>
            <person name="Hyman R.W."/>
            <person name="Jones T."/>
            <person name="Kahn D."/>
            <person name="Kahn M.L."/>
            <person name="Kalman S."/>
            <person name="Keating D.H."/>
            <person name="Kiss E."/>
            <person name="Komp C."/>
            <person name="Lelaure V."/>
            <person name="Masuy D."/>
            <person name="Palm C."/>
            <person name="Peck M.C."/>
            <person name="Pohl T.M."/>
            <person name="Portetelle D."/>
            <person name="Purnelle B."/>
            <person name="Ramsperger U."/>
            <person name="Surzycki R."/>
            <person name="Thebault P."/>
            <person name="Vandenbol M."/>
            <person name="Vorhoelter F.J."/>
            <person name="Weidner S."/>
            <person name="Wells D.H."/>
            <person name="Wong K."/>
            <person name="Yeh K.-C."/>
            <person name="Batut J."/>
        </authorList>
    </citation>
    <scope>NUCLEOTIDE SEQUENCE [LARGE SCALE GENOMIC DNA]</scope>
    <source>
        <strain>1021</strain>
    </source>
</reference>
<proteinExistence type="inferred from homology"/>
<dbReference type="EC" id="1.5.1.5" evidence="1"/>
<dbReference type="EC" id="3.5.4.9" evidence="1"/>
<dbReference type="EMBL" id="AL591688">
    <property type="protein sequence ID" value="CAC45265.1"/>
    <property type="molecule type" value="Genomic_DNA"/>
</dbReference>
<dbReference type="RefSeq" id="NP_384799.1">
    <property type="nucleotide sequence ID" value="NC_003047.1"/>
</dbReference>
<dbReference type="SMR" id="Q92RY3"/>
<dbReference type="EnsemblBacteria" id="CAC45265">
    <property type="protein sequence ID" value="CAC45265"/>
    <property type="gene ID" value="SMc03059"/>
</dbReference>
<dbReference type="KEGG" id="sme:SMc03059"/>
<dbReference type="PATRIC" id="fig|266834.11.peg.2067"/>
<dbReference type="eggNOG" id="COG0190">
    <property type="taxonomic scope" value="Bacteria"/>
</dbReference>
<dbReference type="HOGENOM" id="CLU_034045_1_2_5"/>
<dbReference type="OrthoDB" id="9803580at2"/>
<dbReference type="UniPathway" id="UPA00193"/>
<dbReference type="Proteomes" id="UP000001976">
    <property type="component" value="Chromosome"/>
</dbReference>
<dbReference type="GO" id="GO:0005829">
    <property type="term" value="C:cytosol"/>
    <property type="evidence" value="ECO:0007669"/>
    <property type="project" value="TreeGrafter"/>
</dbReference>
<dbReference type="GO" id="GO:0004477">
    <property type="term" value="F:methenyltetrahydrofolate cyclohydrolase activity"/>
    <property type="evidence" value="ECO:0007669"/>
    <property type="project" value="UniProtKB-UniRule"/>
</dbReference>
<dbReference type="GO" id="GO:0004488">
    <property type="term" value="F:methylenetetrahydrofolate dehydrogenase (NADP+) activity"/>
    <property type="evidence" value="ECO:0007669"/>
    <property type="project" value="UniProtKB-UniRule"/>
</dbReference>
<dbReference type="GO" id="GO:0000105">
    <property type="term" value="P:L-histidine biosynthetic process"/>
    <property type="evidence" value="ECO:0007669"/>
    <property type="project" value="UniProtKB-KW"/>
</dbReference>
<dbReference type="GO" id="GO:0009086">
    <property type="term" value="P:methionine biosynthetic process"/>
    <property type="evidence" value="ECO:0007669"/>
    <property type="project" value="UniProtKB-KW"/>
</dbReference>
<dbReference type="GO" id="GO:0006164">
    <property type="term" value="P:purine nucleotide biosynthetic process"/>
    <property type="evidence" value="ECO:0007669"/>
    <property type="project" value="UniProtKB-KW"/>
</dbReference>
<dbReference type="GO" id="GO:0035999">
    <property type="term" value="P:tetrahydrofolate interconversion"/>
    <property type="evidence" value="ECO:0007669"/>
    <property type="project" value="UniProtKB-UniRule"/>
</dbReference>
<dbReference type="CDD" id="cd01080">
    <property type="entry name" value="NAD_bind_m-THF_DH_Cyclohyd"/>
    <property type="match status" value="1"/>
</dbReference>
<dbReference type="FunFam" id="3.40.50.720:FF:000006">
    <property type="entry name" value="Bifunctional protein FolD"/>
    <property type="match status" value="1"/>
</dbReference>
<dbReference type="FunFam" id="3.40.50.10860:FF:000005">
    <property type="entry name" value="C-1-tetrahydrofolate synthase, cytoplasmic, putative"/>
    <property type="match status" value="1"/>
</dbReference>
<dbReference type="Gene3D" id="3.40.50.10860">
    <property type="entry name" value="Leucine Dehydrogenase, chain A, domain 1"/>
    <property type="match status" value="1"/>
</dbReference>
<dbReference type="Gene3D" id="3.40.50.720">
    <property type="entry name" value="NAD(P)-binding Rossmann-like Domain"/>
    <property type="match status" value="1"/>
</dbReference>
<dbReference type="HAMAP" id="MF_01576">
    <property type="entry name" value="THF_DHG_CYH"/>
    <property type="match status" value="1"/>
</dbReference>
<dbReference type="InterPro" id="IPR046346">
    <property type="entry name" value="Aminoacid_DH-like_N_sf"/>
</dbReference>
<dbReference type="InterPro" id="IPR036291">
    <property type="entry name" value="NAD(P)-bd_dom_sf"/>
</dbReference>
<dbReference type="InterPro" id="IPR000672">
    <property type="entry name" value="THF_DH/CycHdrlase"/>
</dbReference>
<dbReference type="InterPro" id="IPR020630">
    <property type="entry name" value="THF_DH/CycHdrlase_cat_dom"/>
</dbReference>
<dbReference type="InterPro" id="IPR020867">
    <property type="entry name" value="THF_DH/CycHdrlase_CS"/>
</dbReference>
<dbReference type="InterPro" id="IPR020631">
    <property type="entry name" value="THF_DH/CycHdrlase_NAD-bd_dom"/>
</dbReference>
<dbReference type="NCBIfam" id="NF010783">
    <property type="entry name" value="PRK14186.1"/>
    <property type="match status" value="1"/>
</dbReference>
<dbReference type="NCBIfam" id="NF010785">
    <property type="entry name" value="PRK14188.1"/>
    <property type="match status" value="1"/>
</dbReference>
<dbReference type="PANTHER" id="PTHR48099:SF5">
    <property type="entry name" value="C-1-TETRAHYDROFOLATE SYNTHASE, CYTOPLASMIC"/>
    <property type="match status" value="1"/>
</dbReference>
<dbReference type="PANTHER" id="PTHR48099">
    <property type="entry name" value="C-1-TETRAHYDROFOLATE SYNTHASE, CYTOPLASMIC-RELATED"/>
    <property type="match status" value="1"/>
</dbReference>
<dbReference type="Pfam" id="PF00763">
    <property type="entry name" value="THF_DHG_CYH"/>
    <property type="match status" value="1"/>
</dbReference>
<dbReference type="Pfam" id="PF02882">
    <property type="entry name" value="THF_DHG_CYH_C"/>
    <property type="match status" value="1"/>
</dbReference>
<dbReference type="PRINTS" id="PR00085">
    <property type="entry name" value="THFDHDRGNASE"/>
</dbReference>
<dbReference type="SUPFAM" id="SSF53223">
    <property type="entry name" value="Aminoacid dehydrogenase-like, N-terminal domain"/>
    <property type="match status" value="1"/>
</dbReference>
<dbReference type="SUPFAM" id="SSF51735">
    <property type="entry name" value="NAD(P)-binding Rossmann-fold domains"/>
    <property type="match status" value="1"/>
</dbReference>
<dbReference type="PROSITE" id="PS00767">
    <property type="entry name" value="THF_DHG_CYH_2"/>
    <property type="match status" value="1"/>
</dbReference>
<keyword id="KW-0028">Amino-acid biosynthesis</keyword>
<keyword id="KW-0368">Histidine biosynthesis</keyword>
<keyword id="KW-0378">Hydrolase</keyword>
<keyword id="KW-0486">Methionine biosynthesis</keyword>
<keyword id="KW-0511">Multifunctional enzyme</keyword>
<keyword id="KW-0521">NADP</keyword>
<keyword id="KW-0554">One-carbon metabolism</keyword>
<keyword id="KW-0560">Oxidoreductase</keyword>
<keyword id="KW-0658">Purine biosynthesis</keyword>
<keyword id="KW-1185">Reference proteome</keyword>
<sequence>MTTVIDGKNVAASVIETVKSATSALESETGVRAGLAVVIVGDDPASHTYVSAKSRMAKECGFLSVQHTLPEETSQEELAALVAELNADPSIHGILVQLPLPKHLRSEPIIQSILPEKDVDGLHVVNAGKLATGDLEGGLVSCTPAGAMVFVRRTYGDDLSGLNAVVIGRSNLFGKPMSALLLAANATVTTAHSRTKDLAAVCRNADILVAAVGRPEMVKADWVKPGAMVVDVGINRVPAPERGEGRTKLVGDVAFDECAKVAGVITPVPGGVGPMTIAMLMANTIIAACRMAGRKPPKF</sequence>
<comment type="function">
    <text evidence="1">Catalyzes the oxidation of 5,10-methylenetetrahydrofolate to 5,10-methenyltetrahydrofolate and then the hydrolysis of 5,10-methenyltetrahydrofolate to 10-formyltetrahydrofolate.</text>
</comment>
<comment type="catalytic activity">
    <reaction evidence="1">
        <text>(6R)-5,10-methylene-5,6,7,8-tetrahydrofolate + NADP(+) = (6R)-5,10-methenyltetrahydrofolate + NADPH</text>
        <dbReference type="Rhea" id="RHEA:22812"/>
        <dbReference type="ChEBI" id="CHEBI:15636"/>
        <dbReference type="ChEBI" id="CHEBI:57455"/>
        <dbReference type="ChEBI" id="CHEBI:57783"/>
        <dbReference type="ChEBI" id="CHEBI:58349"/>
        <dbReference type="EC" id="1.5.1.5"/>
    </reaction>
</comment>
<comment type="catalytic activity">
    <reaction evidence="1">
        <text>(6R)-5,10-methenyltetrahydrofolate + H2O = (6R)-10-formyltetrahydrofolate + H(+)</text>
        <dbReference type="Rhea" id="RHEA:23700"/>
        <dbReference type="ChEBI" id="CHEBI:15377"/>
        <dbReference type="ChEBI" id="CHEBI:15378"/>
        <dbReference type="ChEBI" id="CHEBI:57455"/>
        <dbReference type="ChEBI" id="CHEBI:195366"/>
        <dbReference type="EC" id="3.5.4.9"/>
    </reaction>
</comment>
<comment type="pathway">
    <text evidence="1">One-carbon metabolism; tetrahydrofolate interconversion.</text>
</comment>
<comment type="subunit">
    <text evidence="1">Homodimer.</text>
</comment>
<comment type="similarity">
    <text evidence="1">Belongs to the tetrahydrofolate dehydrogenase/cyclohydrolase family.</text>
</comment>
<name>FOLD2_RHIME</name>
<organism>
    <name type="scientific">Rhizobium meliloti (strain 1021)</name>
    <name type="common">Ensifer meliloti</name>
    <name type="synonym">Sinorhizobium meliloti</name>
    <dbReference type="NCBI Taxonomy" id="266834"/>
    <lineage>
        <taxon>Bacteria</taxon>
        <taxon>Pseudomonadati</taxon>
        <taxon>Pseudomonadota</taxon>
        <taxon>Alphaproteobacteria</taxon>
        <taxon>Hyphomicrobiales</taxon>
        <taxon>Rhizobiaceae</taxon>
        <taxon>Sinorhizobium/Ensifer group</taxon>
        <taxon>Sinorhizobium</taxon>
    </lineage>
</organism>
<evidence type="ECO:0000255" key="1">
    <source>
        <dbReference type="HAMAP-Rule" id="MF_01576"/>
    </source>
</evidence>
<feature type="chain" id="PRO_0000268466" description="Bifunctional protein FolD 2">
    <location>
        <begin position="1"/>
        <end position="299"/>
    </location>
</feature>
<feature type="binding site" evidence="1">
    <location>
        <begin position="168"/>
        <end position="170"/>
    </location>
    <ligand>
        <name>NADP(+)</name>
        <dbReference type="ChEBI" id="CHEBI:58349"/>
    </ligand>
</feature>
<feature type="binding site" evidence="1">
    <location>
        <position position="193"/>
    </location>
    <ligand>
        <name>NADP(+)</name>
        <dbReference type="ChEBI" id="CHEBI:58349"/>
    </ligand>
</feature>
<feature type="binding site" evidence="1">
    <location>
        <position position="234"/>
    </location>
    <ligand>
        <name>NADP(+)</name>
        <dbReference type="ChEBI" id="CHEBI:58349"/>
    </ligand>
</feature>
<protein>
    <recommendedName>
        <fullName evidence="1">Bifunctional protein FolD 2</fullName>
    </recommendedName>
    <domain>
        <recommendedName>
            <fullName evidence="1">Methylenetetrahydrofolate dehydrogenase</fullName>
            <ecNumber evidence="1">1.5.1.5</ecNumber>
        </recommendedName>
    </domain>
    <domain>
        <recommendedName>
            <fullName evidence="1">Methenyltetrahydrofolate cyclohydrolase</fullName>
            <ecNumber evidence="1">3.5.4.9</ecNumber>
        </recommendedName>
    </domain>
</protein>
<gene>
    <name evidence="1" type="primary">folD2</name>
    <name type="ordered locus">R00693</name>
    <name type="ORF">SMc03059</name>
</gene>